<keyword id="KW-0997">Cell inner membrane</keyword>
<keyword id="KW-1003">Cell membrane</keyword>
<keyword id="KW-0460">Magnesium</keyword>
<keyword id="KW-0472">Membrane</keyword>
<keyword id="KW-1185">Reference proteome</keyword>
<keyword id="KW-0808">Transferase</keyword>
<keyword id="KW-0812">Transmembrane</keyword>
<keyword id="KW-1133">Transmembrane helix</keyword>
<keyword id="KW-0831">Ubiquinone biosynthesis</keyword>
<accession>A3N0I2</accession>
<proteinExistence type="inferred from homology"/>
<protein>
    <recommendedName>
        <fullName evidence="1">4-hydroxybenzoate octaprenyltransferase</fullName>
        <ecNumber evidence="1">2.5.1.39</ecNumber>
    </recommendedName>
    <alternativeName>
        <fullName evidence="1">4-HB polyprenyltransferase</fullName>
    </alternativeName>
</protein>
<reference key="1">
    <citation type="journal article" date="2008" name="J. Bacteriol.">
        <title>The complete genome sequence of Actinobacillus pleuropneumoniae L20 (serotype 5b).</title>
        <authorList>
            <person name="Foote S.J."/>
            <person name="Bosse J.T."/>
            <person name="Bouevitch A.B."/>
            <person name="Langford P.R."/>
            <person name="Young N.M."/>
            <person name="Nash J.H.E."/>
        </authorList>
    </citation>
    <scope>NUCLEOTIDE SEQUENCE [LARGE SCALE GENOMIC DNA]</scope>
    <source>
        <strain>L20</strain>
    </source>
</reference>
<evidence type="ECO:0000255" key="1">
    <source>
        <dbReference type="HAMAP-Rule" id="MF_01635"/>
    </source>
</evidence>
<comment type="function">
    <text evidence="1">Catalyzes the prenylation of para-hydroxybenzoate (PHB) with an all-trans polyprenyl group. Mediates the second step in the final reaction sequence of ubiquinone-8 (UQ-8) biosynthesis, which is the condensation of the polyisoprenoid side chain with PHB, generating the first membrane-bound Q intermediate 3-octaprenyl-4-hydroxybenzoate.</text>
</comment>
<comment type="catalytic activity">
    <reaction evidence="1">
        <text>all-trans-octaprenyl diphosphate + 4-hydroxybenzoate = 4-hydroxy-3-(all-trans-octaprenyl)benzoate + diphosphate</text>
        <dbReference type="Rhea" id="RHEA:27782"/>
        <dbReference type="ChEBI" id="CHEBI:1617"/>
        <dbReference type="ChEBI" id="CHEBI:17879"/>
        <dbReference type="ChEBI" id="CHEBI:33019"/>
        <dbReference type="ChEBI" id="CHEBI:57711"/>
        <dbReference type="EC" id="2.5.1.39"/>
    </reaction>
</comment>
<comment type="cofactor">
    <cofactor evidence="1">
        <name>Mg(2+)</name>
        <dbReference type="ChEBI" id="CHEBI:18420"/>
    </cofactor>
</comment>
<comment type="pathway">
    <text evidence="1">Cofactor biosynthesis; ubiquinone biosynthesis.</text>
</comment>
<comment type="subcellular location">
    <subcellularLocation>
        <location evidence="1">Cell inner membrane</location>
        <topology evidence="1">Multi-pass membrane protein</topology>
    </subcellularLocation>
</comment>
<comment type="similarity">
    <text evidence="1">Belongs to the UbiA prenyltransferase family.</text>
</comment>
<feature type="chain" id="PRO_0000336971" description="4-hydroxybenzoate octaprenyltransferase">
    <location>
        <begin position="1"/>
        <end position="293"/>
    </location>
</feature>
<feature type="transmembrane region" description="Helical" evidence="1">
    <location>
        <begin position="41"/>
        <end position="61"/>
    </location>
</feature>
<feature type="transmembrane region" description="Helical" evidence="1">
    <location>
        <begin position="98"/>
        <end position="118"/>
    </location>
</feature>
<feature type="transmembrane region" description="Helical" evidence="1">
    <location>
        <begin position="122"/>
        <end position="142"/>
    </location>
</feature>
<feature type="transmembrane region" description="Helical" evidence="1">
    <location>
        <begin position="145"/>
        <end position="165"/>
    </location>
</feature>
<feature type="transmembrane region" description="Helical" evidence="1">
    <location>
        <begin position="167"/>
        <end position="187"/>
    </location>
</feature>
<feature type="transmembrane region" description="Helical" evidence="1">
    <location>
        <begin position="218"/>
        <end position="238"/>
    </location>
</feature>
<feature type="transmembrane region" description="Helical" evidence="1">
    <location>
        <begin position="241"/>
        <end position="261"/>
    </location>
</feature>
<feature type="transmembrane region" description="Helical" evidence="1">
    <location>
        <begin position="272"/>
        <end position="292"/>
    </location>
</feature>
<sequence>MTTFFQQHFSRNKWLAYAQLMRFDKPIGTLLLLHPTLWALFAAAGGMPPLSVLVIFVLGVIVMRAAGCVINDYADRHIDGEVKRTSQRPLATGRVTTTEAKILFVLLLCIAFVLDLLLNRYTFLLSFVAVALAIIYPFMKRFTHLPQVVLGMAFGWAIPMAYGAVSESLPLECWLLFFANIFWTVAYDTQYAMVDRDDDLRIGVKSTAILFAQYDNKIIALLQFITLVLLVIFGWISQYHWGYFVVLGLSASLFSHQCWLTKQRVREQCFKAFLNNHYFGLGVFFAILVGIYA</sequence>
<name>UBIA_ACTP2</name>
<gene>
    <name evidence="1" type="primary">ubiA</name>
    <name type="ordered locus">APL_0822</name>
</gene>
<dbReference type="EC" id="2.5.1.39" evidence="1"/>
<dbReference type="EMBL" id="CP000569">
    <property type="protein sequence ID" value="ABN73918.1"/>
    <property type="molecule type" value="Genomic_DNA"/>
</dbReference>
<dbReference type="RefSeq" id="WP_005601109.1">
    <property type="nucleotide sequence ID" value="NC_009053.1"/>
</dbReference>
<dbReference type="SMR" id="A3N0I2"/>
<dbReference type="STRING" id="416269.APL_0822"/>
<dbReference type="EnsemblBacteria" id="ABN73918">
    <property type="protein sequence ID" value="ABN73918"/>
    <property type="gene ID" value="APL_0822"/>
</dbReference>
<dbReference type="KEGG" id="apl:APL_0822"/>
<dbReference type="eggNOG" id="COG0382">
    <property type="taxonomic scope" value="Bacteria"/>
</dbReference>
<dbReference type="HOGENOM" id="CLU_034879_1_0_6"/>
<dbReference type="UniPathway" id="UPA00232"/>
<dbReference type="Proteomes" id="UP000001432">
    <property type="component" value="Chromosome"/>
</dbReference>
<dbReference type="GO" id="GO:0005886">
    <property type="term" value="C:plasma membrane"/>
    <property type="evidence" value="ECO:0007669"/>
    <property type="project" value="UniProtKB-SubCell"/>
</dbReference>
<dbReference type="GO" id="GO:0008412">
    <property type="term" value="F:4-hydroxybenzoate polyprenyltransferase activity"/>
    <property type="evidence" value="ECO:0007669"/>
    <property type="project" value="UniProtKB-UniRule"/>
</dbReference>
<dbReference type="GO" id="GO:0006744">
    <property type="term" value="P:ubiquinone biosynthetic process"/>
    <property type="evidence" value="ECO:0007669"/>
    <property type="project" value="UniProtKB-UniRule"/>
</dbReference>
<dbReference type="CDD" id="cd13959">
    <property type="entry name" value="PT_UbiA_COQ2"/>
    <property type="match status" value="1"/>
</dbReference>
<dbReference type="FunFam" id="1.10.357.140:FF:000002">
    <property type="entry name" value="4-hydroxybenzoate octaprenyltransferase"/>
    <property type="match status" value="1"/>
</dbReference>
<dbReference type="FunFam" id="1.20.120.1780:FF:000001">
    <property type="entry name" value="4-hydroxybenzoate octaprenyltransferase"/>
    <property type="match status" value="1"/>
</dbReference>
<dbReference type="Gene3D" id="1.10.357.140">
    <property type="entry name" value="UbiA prenyltransferase"/>
    <property type="match status" value="1"/>
</dbReference>
<dbReference type="Gene3D" id="1.20.120.1780">
    <property type="entry name" value="UbiA prenyltransferase"/>
    <property type="match status" value="1"/>
</dbReference>
<dbReference type="HAMAP" id="MF_01635">
    <property type="entry name" value="UbiA"/>
    <property type="match status" value="1"/>
</dbReference>
<dbReference type="InterPro" id="IPR006370">
    <property type="entry name" value="HB_polyprenyltransferase-like"/>
</dbReference>
<dbReference type="InterPro" id="IPR039653">
    <property type="entry name" value="Prenyltransferase"/>
</dbReference>
<dbReference type="InterPro" id="IPR000537">
    <property type="entry name" value="UbiA_prenyltransferase"/>
</dbReference>
<dbReference type="InterPro" id="IPR030470">
    <property type="entry name" value="UbiA_prenylTrfase_CS"/>
</dbReference>
<dbReference type="InterPro" id="IPR044878">
    <property type="entry name" value="UbiA_sf"/>
</dbReference>
<dbReference type="NCBIfam" id="TIGR01474">
    <property type="entry name" value="ubiA_proteo"/>
    <property type="match status" value="1"/>
</dbReference>
<dbReference type="PANTHER" id="PTHR11048:SF28">
    <property type="entry name" value="4-HYDROXYBENZOATE POLYPRENYLTRANSFERASE, MITOCHONDRIAL"/>
    <property type="match status" value="1"/>
</dbReference>
<dbReference type="PANTHER" id="PTHR11048">
    <property type="entry name" value="PRENYLTRANSFERASES"/>
    <property type="match status" value="1"/>
</dbReference>
<dbReference type="Pfam" id="PF01040">
    <property type="entry name" value="UbiA"/>
    <property type="match status" value="1"/>
</dbReference>
<dbReference type="PROSITE" id="PS00943">
    <property type="entry name" value="UBIA"/>
    <property type="match status" value="1"/>
</dbReference>
<organism>
    <name type="scientific">Actinobacillus pleuropneumoniae serotype 5b (strain L20)</name>
    <dbReference type="NCBI Taxonomy" id="416269"/>
    <lineage>
        <taxon>Bacteria</taxon>
        <taxon>Pseudomonadati</taxon>
        <taxon>Pseudomonadota</taxon>
        <taxon>Gammaproteobacteria</taxon>
        <taxon>Pasteurellales</taxon>
        <taxon>Pasteurellaceae</taxon>
        <taxon>Actinobacillus</taxon>
    </lineage>
</organism>